<accession>P46227</accession>
<dbReference type="EMBL" id="D28752">
    <property type="protein sequence ID" value="BAA05945.1"/>
    <property type="molecule type" value="Genomic_DNA"/>
</dbReference>
<dbReference type="EMBL" id="AP008231">
    <property type="protein sequence ID" value="BAD79025.1"/>
    <property type="molecule type" value="Genomic_DNA"/>
</dbReference>
<dbReference type="RefSeq" id="WP_011243147.1">
    <property type="nucleotide sequence ID" value="NZ_CP085785.1"/>
</dbReference>
<dbReference type="SMR" id="P46227"/>
<dbReference type="GeneID" id="72429529"/>
<dbReference type="KEGG" id="syc:syc0835_d"/>
<dbReference type="eggNOG" id="COG1327">
    <property type="taxonomic scope" value="Bacteria"/>
</dbReference>
<dbReference type="Proteomes" id="UP000001175">
    <property type="component" value="Chromosome"/>
</dbReference>
<dbReference type="GO" id="GO:0005524">
    <property type="term" value="F:ATP binding"/>
    <property type="evidence" value="ECO:0007669"/>
    <property type="project" value="UniProtKB-KW"/>
</dbReference>
<dbReference type="GO" id="GO:0003677">
    <property type="term" value="F:DNA binding"/>
    <property type="evidence" value="ECO:0007669"/>
    <property type="project" value="UniProtKB-KW"/>
</dbReference>
<dbReference type="GO" id="GO:0008270">
    <property type="term" value="F:zinc ion binding"/>
    <property type="evidence" value="ECO:0007669"/>
    <property type="project" value="UniProtKB-UniRule"/>
</dbReference>
<dbReference type="GO" id="GO:0045892">
    <property type="term" value="P:negative regulation of DNA-templated transcription"/>
    <property type="evidence" value="ECO:0007669"/>
    <property type="project" value="UniProtKB-UniRule"/>
</dbReference>
<dbReference type="HAMAP" id="MF_00440">
    <property type="entry name" value="NrdR"/>
    <property type="match status" value="1"/>
</dbReference>
<dbReference type="InterPro" id="IPR005144">
    <property type="entry name" value="ATP-cone_dom"/>
</dbReference>
<dbReference type="InterPro" id="IPR055173">
    <property type="entry name" value="NrdR-like_N"/>
</dbReference>
<dbReference type="InterPro" id="IPR003796">
    <property type="entry name" value="RNR_NrdR-like"/>
</dbReference>
<dbReference type="NCBIfam" id="TIGR00244">
    <property type="entry name" value="transcriptional regulator NrdR"/>
    <property type="match status" value="1"/>
</dbReference>
<dbReference type="PANTHER" id="PTHR30455">
    <property type="entry name" value="TRANSCRIPTIONAL REPRESSOR NRDR"/>
    <property type="match status" value="1"/>
</dbReference>
<dbReference type="PANTHER" id="PTHR30455:SF2">
    <property type="entry name" value="TRANSCRIPTIONAL REPRESSOR NRDR"/>
    <property type="match status" value="1"/>
</dbReference>
<dbReference type="Pfam" id="PF03477">
    <property type="entry name" value="ATP-cone"/>
    <property type="match status" value="1"/>
</dbReference>
<dbReference type="Pfam" id="PF22811">
    <property type="entry name" value="Zn_ribbon_NrdR"/>
    <property type="match status" value="1"/>
</dbReference>
<dbReference type="PROSITE" id="PS51161">
    <property type="entry name" value="ATP_CONE"/>
    <property type="match status" value="1"/>
</dbReference>
<name>NRDR_SYNP6</name>
<keyword id="KW-0067">ATP-binding</keyword>
<keyword id="KW-0238">DNA-binding</keyword>
<keyword id="KW-0479">Metal-binding</keyword>
<keyword id="KW-0547">Nucleotide-binding</keyword>
<keyword id="KW-0678">Repressor</keyword>
<keyword id="KW-0804">Transcription</keyword>
<keyword id="KW-0805">Transcription regulation</keyword>
<keyword id="KW-0862">Zinc</keyword>
<keyword id="KW-0863">Zinc-finger</keyword>
<comment type="function">
    <text evidence="1">Negatively regulates transcription of bacterial ribonucleotide reductase nrd genes and operons by binding to NrdR-boxes.</text>
</comment>
<comment type="cofactor">
    <cofactor evidence="1">
        <name>Zn(2+)</name>
        <dbReference type="ChEBI" id="CHEBI:29105"/>
    </cofactor>
    <text evidence="1">Binds 1 zinc ion.</text>
</comment>
<comment type="similarity">
    <text evidence="1">Belongs to the NrdR family.</text>
</comment>
<organism>
    <name type="scientific">Synechococcus sp. (strain ATCC 27144 / PCC 6301 / SAUG 1402/1)</name>
    <name type="common">Anacystis nidulans</name>
    <dbReference type="NCBI Taxonomy" id="269084"/>
    <lineage>
        <taxon>Bacteria</taxon>
        <taxon>Bacillati</taxon>
        <taxon>Cyanobacteriota</taxon>
        <taxon>Cyanophyceae</taxon>
        <taxon>Synechococcales</taxon>
        <taxon>Synechococcaceae</taxon>
        <taxon>Synechococcus</taxon>
    </lineage>
</organism>
<protein>
    <recommendedName>
        <fullName evidence="1">Transcriptional repressor NrdR</fullName>
    </recommendedName>
</protein>
<sequence>MQCPACRHTDSRVLESRSSESGRSVRRRRECLSCGHRFTTYERVEFVPISVIKRNGDRESFDRSKLLRGIVRACEKTGVSAQQMDLLVDEIEGTLQQRSSRDVQSSEIGEMVLQQIGRLSEVAYIRFASVYRQFRGVRDFVETLDRLQDLSRDEVGDVPAAVTSLTSA</sequence>
<gene>
    <name evidence="1" type="primary">nrdR</name>
    <name type="ordered locus">syc0835_d</name>
</gene>
<feature type="chain" id="PRO_0000182368" description="Transcriptional repressor NrdR">
    <location>
        <begin position="1"/>
        <end position="168"/>
    </location>
</feature>
<feature type="domain" description="ATP-cone" evidence="1">
    <location>
        <begin position="49"/>
        <end position="139"/>
    </location>
</feature>
<feature type="zinc finger region" evidence="1">
    <location>
        <begin position="3"/>
        <end position="34"/>
    </location>
</feature>
<feature type="region of interest" description="Disordered" evidence="2">
    <location>
        <begin position="1"/>
        <end position="21"/>
    </location>
</feature>
<feature type="compositionally biased region" description="Basic and acidic residues" evidence="2">
    <location>
        <begin position="7"/>
        <end position="20"/>
    </location>
</feature>
<proteinExistence type="inferred from homology"/>
<reference key="1">
    <citation type="journal article" date="1995" name="Mol. Gen. Genet.">
        <title>Structure and expression of the gene encoding ribosomal protein S1 from the cyanobacterium Synechococcus sp. strain PCC 6301: striking sequence similarity to the chloroplast ribosomal protein CS1.</title>
        <authorList>
            <person name="Sugita M."/>
            <person name="Sugita C."/>
            <person name="Sugiura M."/>
        </authorList>
    </citation>
    <scope>NUCLEOTIDE SEQUENCE [GENOMIC DNA]</scope>
</reference>
<reference key="2">
    <citation type="journal article" date="2007" name="Photosyn. Res.">
        <title>Complete nucleotide sequence of the freshwater unicellular cyanobacterium Synechococcus elongatus PCC 6301 chromosome: gene content and organization.</title>
        <authorList>
            <person name="Sugita C."/>
            <person name="Ogata K."/>
            <person name="Shikata M."/>
            <person name="Jikuya H."/>
            <person name="Takano J."/>
            <person name="Furumichi M."/>
            <person name="Kanehisa M."/>
            <person name="Omata T."/>
            <person name="Sugiura M."/>
            <person name="Sugita M."/>
        </authorList>
    </citation>
    <scope>NUCLEOTIDE SEQUENCE [LARGE SCALE GENOMIC DNA]</scope>
    <source>
        <strain>ATCC 27144 / PCC 6301 / SAUG 1402/1</strain>
    </source>
</reference>
<evidence type="ECO:0000255" key="1">
    <source>
        <dbReference type="HAMAP-Rule" id="MF_00440"/>
    </source>
</evidence>
<evidence type="ECO:0000256" key="2">
    <source>
        <dbReference type="SAM" id="MobiDB-lite"/>
    </source>
</evidence>